<dbReference type="EC" id="3.4.19.12"/>
<dbReference type="EC" id="3.4.22.-"/>
<dbReference type="EC" id="3.4.22.69"/>
<dbReference type="EC" id="2.7.7.50"/>
<dbReference type="EMBL" id="AY903459">
    <property type="status" value="NOT_ANNOTATED_CDS"/>
    <property type="molecule type" value="Genomic_RNA"/>
</dbReference>
<dbReference type="EMBL" id="AY903460">
    <property type="status" value="NOT_ANNOTATED_CDS"/>
    <property type="molecule type" value="Genomic_RNA"/>
</dbReference>
<dbReference type="EMBL" id="AY585228">
    <property type="status" value="NOT_ANNOTATED_CDS"/>
    <property type="molecule type" value="Genomic_RNA"/>
</dbReference>
<dbReference type="EMBL" id="AY585229">
    <property type="status" value="NOT_ANNOTATED_CDS"/>
    <property type="molecule type" value="Genomic_RNA"/>
</dbReference>
<dbReference type="EMBL" id="AY391777">
    <property type="status" value="NOT_ANNOTATED_CDS"/>
    <property type="molecule type" value="Genomic_RNA"/>
</dbReference>
<dbReference type="PDB" id="7NH7">
    <property type="method" value="X-ray"/>
    <property type="resolution" value="2.20 A"/>
    <property type="chains" value="B=4242-4363"/>
</dbReference>
<dbReference type="PDBsum" id="7NH7"/>
<dbReference type="SMR" id="P0C6U7"/>
<dbReference type="IntAct" id="P0C6U7">
    <property type="interactions" value="1"/>
</dbReference>
<dbReference type="Proteomes" id="UP000007552">
    <property type="component" value="Genome"/>
</dbReference>
<dbReference type="Proteomes" id="UP000100580">
    <property type="component" value="Genome"/>
</dbReference>
<dbReference type="Proteomes" id="UP000159995">
    <property type="component" value="Genome"/>
</dbReference>
<dbReference type="Proteomes" id="UP000161137">
    <property type="component" value="Genome"/>
</dbReference>
<dbReference type="Proteomes" id="UP000180344">
    <property type="component" value="Genome"/>
</dbReference>
<dbReference type="GO" id="GO:0033644">
    <property type="term" value="C:host cell membrane"/>
    <property type="evidence" value="ECO:0007669"/>
    <property type="project" value="UniProtKB-SubCell"/>
</dbReference>
<dbReference type="GO" id="GO:0044220">
    <property type="term" value="C:host cell perinuclear region of cytoplasm"/>
    <property type="evidence" value="ECO:0007669"/>
    <property type="project" value="UniProtKB-SubCell"/>
</dbReference>
<dbReference type="GO" id="GO:0016020">
    <property type="term" value="C:membrane"/>
    <property type="evidence" value="ECO:0007669"/>
    <property type="project" value="UniProtKB-KW"/>
</dbReference>
<dbReference type="GO" id="GO:0004843">
    <property type="term" value="F:cysteine-type deubiquitinase activity"/>
    <property type="evidence" value="ECO:0007669"/>
    <property type="project" value="UniProtKB-EC"/>
</dbReference>
<dbReference type="GO" id="GO:0004197">
    <property type="term" value="F:cysteine-type endopeptidase activity"/>
    <property type="evidence" value="ECO:0007669"/>
    <property type="project" value="InterPro"/>
</dbReference>
<dbReference type="GO" id="GO:0004519">
    <property type="term" value="F:endonuclease activity"/>
    <property type="evidence" value="ECO:0007669"/>
    <property type="project" value="UniProtKB-KW"/>
</dbReference>
<dbReference type="GO" id="GO:0008168">
    <property type="term" value="F:methyltransferase activity"/>
    <property type="evidence" value="ECO:0007669"/>
    <property type="project" value="UniProtKB-KW"/>
</dbReference>
<dbReference type="GO" id="GO:0008242">
    <property type="term" value="F:omega peptidase activity"/>
    <property type="evidence" value="ECO:0007669"/>
    <property type="project" value="InterPro"/>
</dbReference>
<dbReference type="GO" id="GO:0003968">
    <property type="term" value="F:RNA-directed RNA polymerase activity"/>
    <property type="evidence" value="ECO:0007669"/>
    <property type="project" value="InterPro"/>
</dbReference>
<dbReference type="GO" id="GO:0003727">
    <property type="term" value="F:single-stranded RNA binding"/>
    <property type="evidence" value="ECO:0007669"/>
    <property type="project" value="InterPro"/>
</dbReference>
<dbReference type="GO" id="GO:0008270">
    <property type="term" value="F:zinc ion binding"/>
    <property type="evidence" value="ECO:0007669"/>
    <property type="project" value="UniProtKB-KW"/>
</dbReference>
<dbReference type="GO" id="GO:0032259">
    <property type="term" value="P:methylation"/>
    <property type="evidence" value="ECO:0007669"/>
    <property type="project" value="UniProtKB-KW"/>
</dbReference>
<dbReference type="GO" id="GO:0006508">
    <property type="term" value="P:proteolysis"/>
    <property type="evidence" value="ECO:0007669"/>
    <property type="project" value="UniProtKB-KW"/>
</dbReference>
<dbReference type="GO" id="GO:0010506">
    <property type="term" value="P:regulation of autophagy"/>
    <property type="evidence" value="ECO:0007669"/>
    <property type="project" value="InterPro"/>
</dbReference>
<dbReference type="GO" id="GO:0039520">
    <property type="term" value="P:symbiont-mediated activation of host autophagy"/>
    <property type="evidence" value="ECO:0007669"/>
    <property type="project" value="UniProtKB-KW"/>
</dbReference>
<dbReference type="GO" id="GO:0039595">
    <property type="term" value="P:symbiont-mediated degradation of host mRNA"/>
    <property type="evidence" value="ECO:0007669"/>
    <property type="project" value="UniProtKB-KW"/>
</dbReference>
<dbReference type="GO" id="GO:0039648">
    <property type="term" value="P:symbiont-mediated perturbation of host ubiquitin-like protein modification"/>
    <property type="evidence" value="ECO:0007669"/>
    <property type="project" value="UniProtKB-KW"/>
</dbReference>
<dbReference type="GO" id="GO:0039548">
    <property type="term" value="P:symbiont-mediated suppression of host cytoplasmic pattern recognition receptor signaling pathway via inhibition of IRF3 activity"/>
    <property type="evidence" value="ECO:0007669"/>
    <property type="project" value="UniProtKB-KW"/>
</dbReference>
<dbReference type="GO" id="GO:0039657">
    <property type="term" value="P:symbiont-mediated suppression of host gene expression"/>
    <property type="evidence" value="ECO:0007669"/>
    <property type="project" value="UniProtKB-KW"/>
</dbReference>
<dbReference type="GO" id="GO:0039579">
    <property type="term" value="P:symbiont-mediated suppression of host ISG15-protein conjugation"/>
    <property type="evidence" value="ECO:0007669"/>
    <property type="project" value="UniProtKB-KW"/>
</dbReference>
<dbReference type="GO" id="GO:0039502">
    <property type="term" value="P:symbiont-mediated suppression of host type I interferon-mediated signaling pathway"/>
    <property type="evidence" value="ECO:0007669"/>
    <property type="project" value="UniProtKB-KW"/>
</dbReference>
<dbReference type="GO" id="GO:0019079">
    <property type="term" value="P:viral genome replication"/>
    <property type="evidence" value="ECO:0007669"/>
    <property type="project" value="InterPro"/>
</dbReference>
<dbReference type="GO" id="GO:0019082">
    <property type="term" value="P:viral protein processing"/>
    <property type="evidence" value="ECO:0007669"/>
    <property type="project" value="InterPro"/>
</dbReference>
<dbReference type="GO" id="GO:0075523">
    <property type="term" value="P:viral translational frameshifting"/>
    <property type="evidence" value="ECO:0007669"/>
    <property type="project" value="UniProtKB-KW"/>
</dbReference>
<dbReference type="CDD" id="cd21901">
    <property type="entry name" value="alpha_betaCoV_Nsp10"/>
    <property type="match status" value="1"/>
</dbReference>
<dbReference type="CDD" id="cd21560">
    <property type="entry name" value="betaCoV-Nsp6"/>
    <property type="match status" value="1"/>
</dbReference>
<dbReference type="CDD" id="cd21519">
    <property type="entry name" value="betaCoV_Nsp2_MHV-like"/>
    <property type="match status" value="1"/>
</dbReference>
<dbReference type="CDD" id="cd21666">
    <property type="entry name" value="betaCoV_Nsp5_Mpro"/>
    <property type="match status" value="1"/>
</dbReference>
<dbReference type="CDD" id="cd21827">
    <property type="entry name" value="betaCoV_Nsp7"/>
    <property type="match status" value="1"/>
</dbReference>
<dbReference type="CDD" id="cd21831">
    <property type="entry name" value="betaCoV_Nsp8"/>
    <property type="match status" value="1"/>
</dbReference>
<dbReference type="CDD" id="cd21898">
    <property type="entry name" value="betaCoV_Nsp9"/>
    <property type="match status" value="1"/>
</dbReference>
<dbReference type="CDD" id="cd21732">
    <property type="entry name" value="betaCoV_PLPro"/>
    <property type="match status" value="1"/>
</dbReference>
<dbReference type="CDD" id="cd21473">
    <property type="entry name" value="cv_Nsp4_TM"/>
    <property type="match status" value="1"/>
</dbReference>
<dbReference type="CDD" id="cd21524">
    <property type="entry name" value="DPUP_MHV_Nsp3"/>
    <property type="match status" value="1"/>
</dbReference>
<dbReference type="CDD" id="cd21557">
    <property type="entry name" value="Macro_X_Nsp3-like"/>
    <property type="match status" value="1"/>
</dbReference>
<dbReference type="CDD" id="cd21879">
    <property type="entry name" value="MHV-like_Nsp1"/>
    <property type="match status" value="1"/>
</dbReference>
<dbReference type="CDD" id="cd21812">
    <property type="entry name" value="MHV-like_Nsp3_betaSM"/>
    <property type="match status" value="1"/>
</dbReference>
<dbReference type="CDD" id="cd21824">
    <property type="entry name" value="MHV-like_Nsp3_NAB"/>
    <property type="match status" value="1"/>
</dbReference>
<dbReference type="CDD" id="cd21714">
    <property type="entry name" value="TM_Y_MHV-like_Nsp3_C"/>
    <property type="match status" value="1"/>
</dbReference>
<dbReference type="CDD" id="cd21467">
    <property type="entry name" value="Ubl1_cv_Nsp3_N-like"/>
    <property type="match status" value="1"/>
</dbReference>
<dbReference type="FunFam" id="1.10.150.420:FF:000001">
    <property type="entry name" value="Replicase polyprotein"/>
    <property type="match status" value="1"/>
</dbReference>
<dbReference type="Gene3D" id="1.10.8.1190">
    <property type="match status" value="2"/>
</dbReference>
<dbReference type="Gene3D" id="2.60.120.1680">
    <property type="match status" value="1"/>
</dbReference>
<dbReference type="Gene3D" id="3.10.20.350">
    <property type="match status" value="1"/>
</dbReference>
<dbReference type="Gene3D" id="3.10.20.540">
    <property type="match status" value="1"/>
</dbReference>
<dbReference type="Gene3D" id="6.10.140.2090">
    <property type="match status" value="1"/>
</dbReference>
<dbReference type="Gene3D" id="1.10.150.420">
    <property type="entry name" value="Coronavirus nonstructural protein 4 C-terminus"/>
    <property type="match status" value="1"/>
</dbReference>
<dbReference type="Gene3D" id="3.40.220.10">
    <property type="entry name" value="Leucine Aminopeptidase, subunit E, domain 1"/>
    <property type="match status" value="1"/>
</dbReference>
<dbReference type="Gene3D" id="1.10.1840.10">
    <property type="entry name" value="main proteinase (3clpro) structure, domain 3"/>
    <property type="match status" value="1"/>
</dbReference>
<dbReference type="Gene3D" id="1.10.8.370">
    <property type="entry name" value="nsp7 replicase"/>
    <property type="match status" value="1"/>
</dbReference>
<dbReference type="Gene3D" id="3.30.70.3540">
    <property type="entry name" value="Nsp8 replicase, head domain"/>
    <property type="match status" value="1"/>
</dbReference>
<dbReference type="Gene3D" id="2.40.10.250">
    <property type="entry name" value="Replicase NSP9"/>
    <property type="match status" value="1"/>
</dbReference>
<dbReference type="Gene3D" id="3.40.50.11020">
    <property type="entry name" value="Replicase polyprotein, nucleic acid-binding domain"/>
    <property type="match status" value="1"/>
</dbReference>
<dbReference type="Gene3D" id="2.40.10.10">
    <property type="entry name" value="Trypsin-like serine proteases"/>
    <property type="match status" value="2"/>
</dbReference>
<dbReference type="InterPro" id="IPR046443">
    <property type="entry name" value="a/bCoV_NSP1_glob"/>
</dbReference>
<dbReference type="InterPro" id="IPR022570">
    <property type="entry name" value="B-CoV_A_NSP1"/>
</dbReference>
<dbReference type="InterPro" id="IPR046442">
    <property type="entry name" value="bCoV_NSP1_C"/>
</dbReference>
<dbReference type="InterPro" id="IPR043613">
    <property type="entry name" value="CoV_NSP2_C"/>
</dbReference>
<dbReference type="InterPro" id="IPR047573">
    <property type="entry name" value="CoV_NSP2_M"/>
</dbReference>
<dbReference type="InterPro" id="IPR049894">
    <property type="entry name" value="COV_NSP3_3ECTO"/>
</dbReference>
<dbReference type="InterPro" id="IPR043611">
    <property type="entry name" value="CoV_NSP3_C"/>
</dbReference>
<dbReference type="InterPro" id="IPR047566">
    <property type="entry name" value="CoV_NSP3_Y"/>
</dbReference>
<dbReference type="InterPro" id="IPR032505">
    <property type="entry name" value="CoV_NSP4_C"/>
</dbReference>
<dbReference type="InterPro" id="IPR043612">
    <property type="entry name" value="CoV_NSP4_N"/>
</dbReference>
<dbReference type="InterPro" id="IPR022733">
    <property type="entry name" value="DPUP_SUD_C_bCoV"/>
</dbReference>
<dbReference type="InterPro" id="IPR002589">
    <property type="entry name" value="Macro_dom"/>
</dbReference>
<dbReference type="InterPro" id="IPR043472">
    <property type="entry name" value="Macro_dom-like"/>
</dbReference>
<dbReference type="InterPro" id="IPR044371">
    <property type="entry name" value="Macro_X_NSP3-like"/>
</dbReference>
<dbReference type="InterPro" id="IPR036333">
    <property type="entry name" value="NSP10_sf_CoV"/>
</dbReference>
<dbReference type="InterPro" id="IPR044384">
    <property type="entry name" value="NSP2_MHV-like"/>
</dbReference>
<dbReference type="InterPro" id="IPR043615">
    <property type="entry name" value="NSP2_N_CoV"/>
</dbReference>
<dbReference type="InterPro" id="IPR044381">
    <property type="entry name" value="NSP3_DPUP_MHV"/>
</dbReference>
<dbReference type="InterPro" id="IPR047567">
    <property type="entry name" value="NSP3_G2M_bCoV"/>
</dbReference>
<dbReference type="InterPro" id="IPR032592">
    <property type="entry name" value="NSP3_NAB_bCoV"/>
</dbReference>
<dbReference type="InterPro" id="IPR042570">
    <property type="entry name" value="NSP3_NAB_bCoV_sf"/>
</dbReference>
<dbReference type="InterPro" id="IPR044357">
    <property type="entry name" value="NSP3_Ubl1_dom_CoV"/>
</dbReference>
<dbReference type="InterPro" id="IPR044353">
    <property type="entry name" value="Nsp3_Ubl2_dom_CoV"/>
</dbReference>
<dbReference type="InterPro" id="IPR038083">
    <property type="entry name" value="NSP3A-like"/>
</dbReference>
<dbReference type="InterPro" id="IPR038123">
    <property type="entry name" value="NSP4_C_sf_CoV"/>
</dbReference>
<dbReference type="InterPro" id="IPR044367">
    <property type="entry name" value="NSP6_betaCoV"/>
</dbReference>
<dbReference type="InterPro" id="IPR043610">
    <property type="entry name" value="NSP6_CoV"/>
</dbReference>
<dbReference type="InterPro" id="IPR014828">
    <property type="entry name" value="NSP7_CoV"/>
</dbReference>
<dbReference type="InterPro" id="IPR037204">
    <property type="entry name" value="NSP7_sf_CoV"/>
</dbReference>
<dbReference type="InterPro" id="IPR014829">
    <property type="entry name" value="NSP8_CoV"/>
</dbReference>
<dbReference type="InterPro" id="IPR037230">
    <property type="entry name" value="NSP8_sf_CoV"/>
</dbReference>
<dbReference type="InterPro" id="IPR014822">
    <property type="entry name" value="NSP9_CoV"/>
</dbReference>
<dbReference type="InterPro" id="IPR036499">
    <property type="entry name" value="NSP9_sf_CoV"/>
</dbReference>
<dbReference type="InterPro" id="IPR002705">
    <property type="entry name" value="Pept_C30/C16_B_coronavir"/>
</dbReference>
<dbReference type="InterPro" id="IPR013016">
    <property type="entry name" value="Peptidase_C16_CoV"/>
</dbReference>
<dbReference type="InterPro" id="IPR008740">
    <property type="entry name" value="Peptidase_C30_CoV"/>
</dbReference>
<dbReference type="InterPro" id="IPR043477">
    <property type="entry name" value="Peptidase_C30_dom3_CoV"/>
</dbReference>
<dbReference type="InterPro" id="IPR009003">
    <property type="entry name" value="Peptidase_S1_PA"/>
</dbReference>
<dbReference type="InterPro" id="IPR043504">
    <property type="entry name" value="Peptidase_S1_PA_chymotrypsin"/>
</dbReference>
<dbReference type="InterPro" id="IPR043177">
    <property type="entry name" value="PLpro_N_sf_CoV"/>
</dbReference>
<dbReference type="InterPro" id="IPR043503">
    <property type="entry name" value="PLpro_palm_finger_dom_CoV"/>
</dbReference>
<dbReference type="InterPro" id="IPR043178">
    <property type="entry name" value="PLpro_thumb_sf_CoV"/>
</dbReference>
<dbReference type="InterPro" id="IPR018995">
    <property type="entry name" value="RNA_synth_NSP10_CoV"/>
</dbReference>
<dbReference type="Pfam" id="PF11963">
    <property type="entry name" value="B-CoV_A_NSP1"/>
    <property type="match status" value="1"/>
</dbReference>
<dbReference type="Pfam" id="PF16251">
    <property type="entry name" value="bCoV_NAB"/>
    <property type="match status" value="1"/>
</dbReference>
<dbReference type="Pfam" id="PF09401">
    <property type="entry name" value="CoV_NSP10"/>
    <property type="match status" value="1"/>
</dbReference>
<dbReference type="Pfam" id="PF19218">
    <property type="entry name" value="CoV_NSP3_C"/>
    <property type="match status" value="1"/>
</dbReference>
<dbReference type="Pfam" id="PF16348">
    <property type="entry name" value="CoV_NSP4_C"/>
    <property type="match status" value="1"/>
</dbReference>
<dbReference type="Pfam" id="PF19217">
    <property type="entry name" value="CoV_NSP4_N"/>
    <property type="match status" value="1"/>
</dbReference>
<dbReference type="Pfam" id="PF19213">
    <property type="entry name" value="CoV_NSP6"/>
    <property type="match status" value="1"/>
</dbReference>
<dbReference type="Pfam" id="PF08716">
    <property type="entry name" value="CoV_NSP7"/>
    <property type="match status" value="1"/>
</dbReference>
<dbReference type="Pfam" id="PF08717">
    <property type="entry name" value="CoV_NSP8"/>
    <property type="match status" value="1"/>
</dbReference>
<dbReference type="Pfam" id="PF08710">
    <property type="entry name" value="CoV_NSP9"/>
    <property type="match status" value="1"/>
</dbReference>
<dbReference type="Pfam" id="PF08715">
    <property type="entry name" value="CoV_peptidase"/>
    <property type="match status" value="1"/>
</dbReference>
<dbReference type="Pfam" id="PF01661">
    <property type="entry name" value="Macro"/>
    <property type="match status" value="1"/>
</dbReference>
<dbReference type="Pfam" id="PF22104">
    <property type="entry name" value="MHV_Nsp3_DPUP"/>
    <property type="match status" value="1"/>
</dbReference>
<dbReference type="Pfam" id="PF01831">
    <property type="entry name" value="Peptidase_C16"/>
    <property type="match status" value="1"/>
</dbReference>
<dbReference type="Pfam" id="PF05409">
    <property type="entry name" value="Peptidase_C30"/>
    <property type="match status" value="1"/>
</dbReference>
<dbReference type="SMART" id="SM00506">
    <property type="entry name" value="A1pp"/>
    <property type="match status" value="1"/>
</dbReference>
<dbReference type="SUPFAM" id="SSF144246">
    <property type="entry name" value="Coronavirus NSP10-like"/>
    <property type="match status" value="1"/>
</dbReference>
<dbReference type="SUPFAM" id="SSF140367">
    <property type="entry name" value="Coronavirus NSP7-like"/>
    <property type="match status" value="1"/>
</dbReference>
<dbReference type="SUPFAM" id="SSF143076">
    <property type="entry name" value="Coronavirus NSP8-like"/>
    <property type="match status" value="1"/>
</dbReference>
<dbReference type="SUPFAM" id="SSF52949">
    <property type="entry name" value="Macro domain-like"/>
    <property type="match status" value="1"/>
</dbReference>
<dbReference type="SUPFAM" id="SSF159936">
    <property type="entry name" value="NSP3A-like"/>
    <property type="match status" value="1"/>
</dbReference>
<dbReference type="SUPFAM" id="SSF101816">
    <property type="entry name" value="Replicase NSP9"/>
    <property type="match status" value="1"/>
</dbReference>
<dbReference type="SUPFAM" id="SSF50494">
    <property type="entry name" value="Trypsin-like serine proteases"/>
    <property type="match status" value="1"/>
</dbReference>
<dbReference type="PROSITE" id="PS51963">
    <property type="entry name" value="BCOV_NSP1_C"/>
    <property type="match status" value="1"/>
</dbReference>
<dbReference type="PROSITE" id="PS51942">
    <property type="entry name" value="BCOV_NSP3C_C"/>
    <property type="match status" value="1"/>
</dbReference>
<dbReference type="PROSITE" id="PS51994">
    <property type="entry name" value="BCOV_NSP3E_G2M"/>
    <property type="match status" value="1"/>
</dbReference>
<dbReference type="PROSITE" id="PS51945">
    <property type="entry name" value="BCOV_NSP3E_NAB"/>
    <property type="match status" value="1"/>
</dbReference>
<dbReference type="PROSITE" id="PS51993">
    <property type="entry name" value="COV_3ECTO"/>
    <property type="match status" value="1"/>
</dbReference>
<dbReference type="PROSITE" id="PS51952">
    <property type="entry name" value="COV_EXON_MTASE_COACT"/>
    <property type="match status" value="1"/>
</dbReference>
<dbReference type="PROSITE" id="PS51962">
    <property type="entry name" value="COV_NSP1"/>
    <property type="match status" value="1"/>
</dbReference>
<dbReference type="PROSITE" id="PS51991">
    <property type="entry name" value="COV_NSP2_C"/>
    <property type="match status" value="1"/>
</dbReference>
<dbReference type="PROSITE" id="PS51990">
    <property type="entry name" value="COV_NSP2_M"/>
    <property type="match status" value="1"/>
</dbReference>
<dbReference type="PROSITE" id="PS51989">
    <property type="entry name" value="COV_NSP2_N"/>
    <property type="match status" value="1"/>
</dbReference>
<dbReference type="PROSITE" id="PS51992">
    <property type="entry name" value="COV_NSP3_Y"/>
    <property type="match status" value="1"/>
</dbReference>
<dbReference type="PROSITE" id="PS51943">
    <property type="entry name" value="COV_NSP3A_UBL"/>
    <property type="match status" value="1"/>
</dbReference>
<dbReference type="PROSITE" id="PS51944">
    <property type="entry name" value="COV_NSP3D_UBL"/>
    <property type="match status" value="1"/>
</dbReference>
<dbReference type="PROSITE" id="PS51946">
    <property type="entry name" value="COV_NSP4C"/>
    <property type="match status" value="1"/>
</dbReference>
<dbReference type="PROSITE" id="PS51949">
    <property type="entry name" value="COV_NSP7"/>
    <property type="match status" value="1"/>
</dbReference>
<dbReference type="PROSITE" id="PS51950">
    <property type="entry name" value="COV_NSP8"/>
    <property type="match status" value="1"/>
</dbReference>
<dbReference type="PROSITE" id="PS51951">
    <property type="entry name" value="COV_NSP9_SSRNA_BD"/>
    <property type="match status" value="1"/>
</dbReference>
<dbReference type="PROSITE" id="PS51442">
    <property type="entry name" value="M_PRO"/>
    <property type="match status" value="1"/>
</dbReference>
<dbReference type="PROSITE" id="PS51154">
    <property type="entry name" value="MACRO"/>
    <property type="match status" value="1"/>
</dbReference>
<dbReference type="PROSITE" id="PS51124">
    <property type="entry name" value="PEPTIDASE_C16"/>
    <property type="match status" value="2"/>
</dbReference>
<name>R1A_CVHOC</name>
<evidence type="ECO:0000250" key="1"/>
<evidence type="ECO:0000250" key="2">
    <source>
        <dbReference type="UniProtKB" id="P0DTC1"/>
    </source>
</evidence>
<evidence type="ECO:0000255" key="3"/>
<evidence type="ECO:0000255" key="4">
    <source>
        <dbReference type="PROSITE-ProRule" id="PRU00214"/>
    </source>
</evidence>
<evidence type="ECO:0000255" key="5">
    <source>
        <dbReference type="PROSITE-ProRule" id="PRU00444"/>
    </source>
</evidence>
<evidence type="ECO:0000255" key="6">
    <source>
        <dbReference type="PROSITE-ProRule" id="PRU00490"/>
    </source>
</evidence>
<evidence type="ECO:0000255" key="7">
    <source>
        <dbReference type="PROSITE-ProRule" id="PRU00772"/>
    </source>
</evidence>
<evidence type="ECO:0000255" key="8">
    <source>
        <dbReference type="PROSITE-ProRule" id="PRU01289"/>
    </source>
</evidence>
<evidence type="ECO:0000255" key="9">
    <source>
        <dbReference type="PROSITE-ProRule" id="PRU01290"/>
    </source>
</evidence>
<evidence type="ECO:0000255" key="10">
    <source>
        <dbReference type="PROSITE-ProRule" id="PRU01291"/>
    </source>
</evidence>
<evidence type="ECO:0000255" key="11">
    <source>
        <dbReference type="PROSITE-ProRule" id="PRU01294"/>
    </source>
</evidence>
<evidence type="ECO:0000255" key="12">
    <source>
        <dbReference type="PROSITE-ProRule" id="PRU01295"/>
    </source>
</evidence>
<evidence type="ECO:0000255" key="13">
    <source>
        <dbReference type="PROSITE-ProRule" id="PRU01296"/>
    </source>
</evidence>
<evidence type="ECO:0000255" key="14">
    <source>
        <dbReference type="PROSITE-ProRule" id="PRU01297"/>
    </source>
</evidence>
<evidence type="ECO:0000255" key="15">
    <source>
        <dbReference type="PROSITE-ProRule" id="PRU01307"/>
    </source>
</evidence>
<evidence type="ECO:0000255" key="16">
    <source>
        <dbReference type="PROSITE-ProRule" id="PRU01308"/>
    </source>
</evidence>
<evidence type="ECO:0000255" key="17">
    <source>
        <dbReference type="PROSITE-ProRule" id="PRU01333"/>
    </source>
</evidence>
<evidence type="ECO:0000255" key="18">
    <source>
        <dbReference type="PROSITE-ProRule" id="PRU01334"/>
    </source>
</evidence>
<evidence type="ECO:0000255" key="19">
    <source>
        <dbReference type="PROSITE-ProRule" id="PRU01335"/>
    </source>
</evidence>
<evidence type="ECO:0000255" key="20">
    <source>
        <dbReference type="PROSITE-ProRule" id="PRU01336"/>
    </source>
</evidence>
<evidence type="ECO:0000255" key="21">
    <source>
        <dbReference type="PROSITE-ProRule" id="PRU01337"/>
    </source>
</evidence>
<evidence type="ECO:0000255" key="22">
    <source>
        <dbReference type="PROSITE-ProRule" id="PRU01338"/>
    </source>
</evidence>
<evidence type="ECO:0000256" key="23">
    <source>
        <dbReference type="SAM" id="MobiDB-lite"/>
    </source>
</evidence>
<evidence type="ECO:0000269" key="24">
    <source>
    </source>
</evidence>
<evidence type="ECO:0000305" key="25"/>
<evidence type="ECO:0007829" key="26">
    <source>
        <dbReference type="PDB" id="7NH7"/>
    </source>
</evidence>
<gene>
    <name type="ORF">1a</name>
</gene>
<comment type="function">
    <text evidence="1">The papain-like proteinase 1 (PL1-PRO) and papain-like proteinase 2 (PL2-PRO) are responsible for the cleavages located at the N-terminus of the replicase polyprotein. In addition, PLP2 possesses a deubiquitinating/deISGylating activity and processes both 'Lys-48'- and 'Lys-63'-linked polyubiquitin chains from cellular substrates. Antagonizes innate immune induction of type I interferon by blocking the phosphorylation, dimerization and subsequent nuclear translocation of host IRF-3 (By similarity).</text>
</comment>
<comment type="function">
    <molecule>3C-like proteinase nsp5</molecule>
    <text evidence="7">Responsible for the majority of cleavages as it cleaves the C-terminus of replicase polyprotein at 11 sites. Recognizes substrates containing the core sequence [ILMVF]-Q-|-[SGACN]. Inhibited by the substrate-analog Cbz-Val-Asn-Ser-Thr-Leu-Gln-CMK. Also contains an ADP-ribose-1''-phosphate (ADRP)-binding function (By similarity).</text>
</comment>
<comment type="function">
    <text evidence="1">Nsp7-nsp8 hexadecamer may possibly confer processivity to the polymerase, maybe by binding to dsRNA or by producing primers utilized by the latter.</text>
</comment>
<comment type="function">
    <molecule>RNA-capping enzyme subunit nsp9</molecule>
    <text evidence="2">Catalytic subunit of viral RNA capping enzyme which catalyzes the RNA guanylyltransferase reaction for genomic and sub-genomic RNAs. The kinase-like NiRAN domain of NSP12 transfers RNA to the amino terminus of NSP9, forming a covalent RNA-protein intermediate. Subsequently, the NiRAN domain transfers RNA to GDP, forming the core cap structure GpppA-RNA. The NSP14 and NSP16 methyltransferases then add methyl groups to form functional cap structures.</text>
</comment>
<comment type="function">
    <molecule>Non-structural protein 1</molecule>
    <text evidence="1 24">Binds to the 40S ribosomal subunit and inhibits host translation. The nsp1-40S ribosome complex further induces an endonucleolytic cleavage near the 5'UTR of host mRNAs, targeting them for degradation. This inhibits the integrated stress response (ISR) in the infected cell by preventing EIF2S1/eIF2-alpha phosphorylation upstream of stress granule formation and depletes host G3BP1 (PubMed:36534661). By suppressing host gene expression, nsp1 facilitates efficient viral gene expression in infected cells and evasion from host immune response (By similarity).</text>
</comment>
<comment type="catalytic activity">
    <molecule>Papain-like protease nsp3</molecule>
    <reaction evidence="2">
        <text>Thiol-dependent hydrolysis of ester, thioester, amide, peptide and isopeptide bonds formed by the C-terminal Gly of ubiquitin (a 76-residue protein attached to proteins as an intracellular targeting signal).</text>
        <dbReference type="EC" id="3.4.19.12"/>
    </reaction>
</comment>
<comment type="catalytic activity">
    <molecule>3C-like proteinase nsp5</molecule>
    <reaction evidence="2">
        <text>TSAVLQ-|-SGFRK-NH2 and SGVTFQ-|-GKFKK the two peptides corresponding to the two self-cleavage sites of the SARS 3C-like proteinase are the two most reactive peptide substrates. The enzyme exhibits a strong preference for substrates containing Gln at P1 position and Leu at P2 position.</text>
        <dbReference type="EC" id="3.4.22.69"/>
    </reaction>
</comment>
<comment type="catalytic activity">
    <molecule>RNA-capping enzyme subunit nsp9</molecule>
    <reaction evidence="2">
        <text>a 5'-end diphospho-ribonucleoside in mRNA + GTP + H(+) = a 5'-end (5'-triphosphoguanosine)-ribonucleoside in mRNA + diphosphate</text>
        <dbReference type="Rhea" id="RHEA:67012"/>
        <dbReference type="Rhea" id="RHEA-COMP:17165"/>
        <dbReference type="Rhea" id="RHEA-COMP:17166"/>
        <dbReference type="ChEBI" id="CHEBI:15378"/>
        <dbReference type="ChEBI" id="CHEBI:33019"/>
        <dbReference type="ChEBI" id="CHEBI:37565"/>
        <dbReference type="ChEBI" id="CHEBI:167616"/>
        <dbReference type="ChEBI" id="CHEBI:167617"/>
        <dbReference type="EC" id="2.7.7.50"/>
    </reaction>
    <physiologicalReaction direction="right-to-left" evidence="2">
        <dbReference type="Rhea" id="RHEA:67014"/>
    </physiologicalReaction>
</comment>
<comment type="subunit">
    <text evidence="1">3CL-PRO exists as monomer and homodimer. Eight copies of nsp7 and eight copies of nsp8 assemble to form a heterohexadecamer. Nsp9 is a dimer. Nsp10 forms a dodecamer (By similarity).</text>
</comment>
<comment type="subcellular location">
    <molecule>Papain-like protease nsp3</molecule>
    <subcellularLocation>
        <location evidence="25">Host membrane</location>
        <topology evidence="25">Multi-pass membrane protein</topology>
    </subcellularLocation>
</comment>
<comment type="subcellular location">
    <molecule>Non-structural protein 4</molecule>
    <subcellularLocation>
        <location evidence="25">Host membrane</location>
        <topology evidence="25">Multi-pass membrane protein</topology>
    </subcellularLocation>
</comment>
<comment type="subcellular location">
    <molecule>Non-structural protein 6</molecule>
    <subcellularLocation>
        <location evidence="25">Host membrane</location>
        <topology evidence="25">Multi-pass membrane protein</topology>
    </subcellularLocation>
</comment>
<comment type="subcellular location">
    <molecule>Non-structural protein 7</molecule>
    <subcellularLocation>
        <location evidence="1">Host cytoplasm</location>
        <location evidence="1">Host perinuclear region</location>
    </subcellularLocation>
    <text evidence="1">nsp7, nsp8, nsp9 and nsp10 are localized in cytoplasmic foci, largely perinuclear. Late in infection, they merge into confluent complexes (By similarity).</text>
</comment>
<comment type="subcellular location">
    <molecule>Non-structural protein 8</molecule>
    <subcellularLocation>
        <location evidence="1">Host cytoplasm</location>
        <location evidence="1">Host perinuclear region</location>
    </subcellularLocation>
    <text evidence="1">nsp7, nsp8, nsp9 and nsp10 are localized in cytoplasmic foci, largely perinuclear. Late in infection, they merge into confluent complexes (By similarity).</text>
</comment>
<comment type="subcellular location">
    <molecule>RNA-capping enzyme subunit nsp9</molecule>
    <subcellularLocation>
        <location evidence="1">Host cytoplasm</location>
        <location evidence="1">Host perinuclear region</location>
    </subcellularLocation>
    <text evidence="1">nsp7, nsp8, nsp9 and nsp10 are localized in cytoplasmic foci, largely perinuclear. Late in infection, they merge into confluent complexes (By similarity).</text>
</comment>
<comment type="subcellular location">
    <molecule>Non-structural protein 10</molecule>
    <subcellularLocation>
        <location evidence="1">Host cytoplasm</location>
        <location evidence="1">Host perinuclear region</location>
    </subcellularLocation>
    <text evidence="1">nsp7, nsp8, nsp9 and nsp10 are localized in cytoplasmic foci, largely perinuclear. Late in infection, they merge into confluent complexes (By similarity).</text>
</comment>
<comment type="alternative products">
    <event type="ribosomal frameshifting"/>
    <isoform>
        <id>P0C6U7-1</id>
        <name>Replicase polyprotein 1a</name>
        <name>pp1a</name>
        <name>ORF1a polyprotein</name>
        <sequence type="displayed"/>
    </isoform>
    <isoform>
        <id>P0C6X6-1</id>
        <name>Replicase polyprotein 1ab</name>
        <name>pp1ab</name>
        <sequence type="external"/>
    </isoform>
</comment>
<comment type="domain">
    <text>The hydrophobic domains (HD) could mediate the membrane association of the replication complex and thereby alter the architecture of the host cell membrane.</text>
</comment>
<comment type="PTM">
    <text evidence="1">Specific enzymatic cleavages in vivo by its own proteases yield mature proteins. 3CL-PRO and PL-PRO proteinases are autocatalytically processed (By similarity).</text>
</comment>
<comment type="miscellaneous">
    <text>The sequence shown is that of isolate 19572 Belgium 2004.</text>
</comment>
<comment type="miscellaneous">
    <molecule>Isoform Replicase polyprotein 1a</molecule>
    <text>Produced by conventional translation.</text>
</comment>
<comment type="similarity">
    <text evidence="25">Belongs to the coronaviruses polyprotein 1ab family.</text>
</comment>
<organism>
    <name type="scientific">Human coronavirus OC43</name>
    <name type="common">HCoV-OC43</name>
    <dbReference type="NCBI Taxonomy" id="31631"/>
    <lineage>
        <taxon>Viruses</taxon>
        <taxon>Riboviria</taxon>
        <taxon>Orthornavirae</taxon>
        <taxon>Pisuviricota</taxon>
        <taxon>Pisoniviricetes</taxon>
        <taxon>Nidovirales</taxon>
        <taxon>Cornidovirineae</taxon>
        <taxon>Coronaviridae</taxon>
        <taxon>Orthocoronavirinae</taxon>
        <taxon>Betacoronavirus</taxon>
        <taxon>Embecovirus</taxon>
        <taxon>Betacoronavirus 1</taxon>
    </lineage>
</organism>
<organismHost>
    <name type="scientific">Homo sapiens</name>
    <name type="common">Human</name>
    <dbReference type="NCBI Taxonomy" id="9606"/>
</organismHost>
<feature type="chain" id="PRO_0000338242" description="Replicase polyprotein 1a">
    <location>
        <begin position="1"/>
        <end position="4383"/>
    </location>
</feature>
<feature type="chain" id="PRO_0000338243" description="Non-structural protein 1" evidence="1">
    <location>
        <begin position="1"/>
        <end position="246"/>
    </location>
</feature>
<feature type="chain" id="PRO_0000338244" description="Non-structural protein 2" evidence="1">
    <location>
        <begin position="247"/>
        <end position="851"/>
    </location>
</feature>
<feature type="chain" id="PRO_0000338245" description="Papain-like protease nsp3" evidence="1">
    <location>
        <begin position="852"/>
        <end position="2750"/>
    </location>
</feature>
<feature type="chain" id="PRO_0000338246" description="Non-structural protein 4" evidence="1">
    <location>
        <begin position="2751"/>
        <end position="3246"/>
    </location>
</feature>
<feature type="chain" id="PRO_0000338247" description="3C-like proteinase nsp5" evidence="1">
    <location>
        <begin position="3247"/>
        <end position="3549"/>
    </location>
</feature>
<feature type="chain" id="PRO_0000338248" description="Non-structural protein 6" evidence="1">
    <location>
        <begin position="3550"/>
        <end position="3836"/>
    </location>
</feature>
<feature type="chain" id="PRO_0000338249" description="Non-structural protein 7" evidence="1">
    <location>
        <begin position="3837"/>
        <end position="3925"/>
    </location>
</feature>
<feature type="chain" id="PRO_0000338250" description="Non-structural protein 8" evidence="1">
    <location>
        <begin position="3926"/>
        <end position="4122"/>
    </location>
</feature>
<feature type="chain" id="PRO_0000338251" description="RNA-capping enzyme subunit nsp9" evidence="1">
    <location>
        <begin position="4123"/>
        <end position="4232"/>
    </location>
</feature>
<feature type="chain" id="PRO_0000338252" description="Non-structural protein 10" evidence="1">
    <location>
        <begin position="4233"/>
        <end position="4369"/>
    </location>
</feature>
<feature type="chain" id="PRO_0000338253" description="Non-structural protein 11" evidence="3">
    <location>
        <begin position="4370"/>
        <end position="4383"/>
    </location>
</feature>
<feature type="transmembrane region" description="Helical" evidence="3">
    <location>
        <begin position="2138"/>
        <end position="2158"/>
    </location>
</feature>
<feature type="transmembrane region" description="Helical" evidence="3">
    <location>
        <begin position="2199"/>
        <end position="2219"/>
    </location>
</feature>
<feature type="transmembrane region" description="Helical" evidence="3">
    <location>
        <begin position="2221"/>
        <end position="2241"/>
    </location>
</feature>
<feature type="transmembrane region" description="Helical" evidence="3">
    <location>
        <begin position="2313"/>
        <end position="2333"/>
    </location>
</feature>
<feature type="transmembrane region" description="Helical" evidence="3">
    <location>
        <begin position="2343"/>
        <end position="2363"/>
    </location>
</feature>
<feature type="transmembrane region" description="Helical" evidence="3">
    <location>
        <begin position="2365"/>
        <end position="2385"/>
    </location>
</feature>
<feature type="transmembrane region" description="Helical" evidence="3">
    <location>
        <begin position="2752"/>
        <end position="2772"/>
    </location>
</feature>
<feature type="transmembrane region" description="Helical" evidence="3">
    <location>
        <begin position="2824"/>
        <end position="2844"/>
    </location>
</feature>
<feature type="transmembrane region" description="Helical" evidence="3">
    <location>
        <begin position="3009"/>
        <end position="3029"/>
    </location>
</feature>
<feature type="transmembrane region" description="Helical" evidence="3">
    <location>
        <begin position="3031"/>
        <end position="3051"/>
    </location>
</feature>
<feature type="transmembrane region" description="Helical" evidence="3">
    <location>
        <begin position="3063"/>
        <end position="3083"/>
    </location>
</feature>
<feature type="transmembrane region" description="Helical" evidence="3">
    <location>
        <begin position="3090"/>
        <end position="3110"/>
    </location>
</feature>
<feature type="transmembrane region" description="Helical" evidence="3">
    <location>
        <begin position="3115"/>
        <end position="3135"/>
    </location>
</feature>
<feature type="transmembrane region" description="Helical" evidence="3">
    <location>
        <begin position="3558"/>
        <end position="3578"/>
    </location>
</feature>
<feature type="transmembrane region" description="Helical" evidence="3">
    <location>
        <begin position="3588"/>
        <end position="3608"/>
    </location>
</feature>
<feature type="transmembrane region" description="Helical" evidence="3">
    <location>
        <begin position="3615"/>
        <end position="3635"/>
    </location>
</feature>
<feature type="transmembrane region" description="Helical" evidence="3">
    <location>
        <begin position="3657"/>
        <end position="3677"/>
    </location>
</feature>
<feature type="transmembrane region" description="Helical" evidence="3">
    <location>
        <begin position="3684"/>
        <end position="3704"/>
    </location>
</feature>
<feature type="transmembrane region" description="Helical" evidence="3">
    <location>
        <begin position="3711"/>
        <end position="3731"/>
    </location>
</feature>
<feature type="transmembrane region" description="Helical" evidence="3">
    <location>
        <begin position="3755"/>
        <end position="3775"/>
    </location>
</feature>
<feature type="domain" description="CoV Nsp1 globular" evidence="15">
    <location>
        <begin position="54"/>
        <end position="196"/>
    </location>
</feature>
<feature type="domain" description="BetaCoV Nsp1 C-terminal" evidence="16">
    <location>
        <begin position="216"/>
        <end position="246"/>
    </location>
</feature>
<feature type="domain" description="CoV Nsp2 N-terminal" evidence="17">
    <location>
        <begin position="250"/>
        <end position="514"/>
    </location>
</feature>
<feature type="domain" description="CoV Nsp2 middle" evidence="18">
    <location>
        <begin position="524"/>
        <end position="713"/>
    </location>
</feature>
<feature type="domain" description="CoV Nsp2 C-terminal" evidence="19">
    <location>
        <begin position="733"/>
        <end position="851"/>
    </location>
</feature>
<feature type="domain" description="Ubiquitin-like 1" evidence="4">
    <location>
        <begin position="853"/>
        <end position="966"/>
    </location>
</feature>
<feature type="domain" description="Peptidase C16 1" evidence="5">
    <location>
        <begin position="1036"/>
        <end position="1274"/>
    </location>
</feature>
<feature type="domain" description="Macro" evidence="6">
    <location>
        <begin position="1275"/>
        <end position="1435"/>
    </location>
</feature>
<feature type="domain" description="DPUP" evidence="8">
    <location>
        <begin position="1491"/>
        <end position="1563"/>
    </location>
</feature>
<feature type="domain" description="Ubiquitin-like 2" evidence="4">
    <location>
        <begin position="1562"/>
        <end position="1617"/>
    </location>
</feature>
<feature type="domain" description="Peptidase C16 2" evidence="5">
    <location>
        <begin position="1631"/>
        <end position="1892"/>
    </location>
</feature>
<feature type="domain" description="Nucleic acid-binding" evidence="9">
    <location>
        <begin position="1906"/>
        <end position="2007"/>
    </location>
</feature>
<feature type="domain" description="G2M" evidence="22">
    <location>
        <begin position="2020"/>
        <end position="2169"/>
    </location>
</feature>
<feature type="domain" description="3Ecto" evidence="21">
    <location>
        <begin position="2235"/>
        <end position="2296"/>
    </location>
</feature>
<feature type="domain" description="CoV Nsp3 Y" evidence="20">
    <location>
        <begin position="2383"/>
        <end position="2750"/>
    </location>
</feature>
<feature type="domain" description="Nsp4C" evidence="10">
    <location>
        <begin position="3149"/>
        <end position="3246"/>
    </location>
</feature>
<feature type="domain" description="Peptidase C30" evidence="7">
    <location>
        <begin position="3247"/>
        <end position="3549"/>
    </location>
</feature>
<feature type="domain" description="RdRp Nsp7 cofactor" evidence="11">
    <location>
        <begin position="3837"/>
        <end position="3925"/>
    </location>
</feature>
<feature type="domain" description="RdRp Nsp8 cofactor" evidence="12">
    <location>
        <begin position="3926"/>
        <end position="4122"/>
    </location>
</feature>
<feature type="domain" description="Nsp9 ssRNA-binding" evidence="13">
    <location>
        <begin position="4123"/>
        <end position="4232"/>
    </location>
</feature>
<feature type="domain" description="ExoN/MTase coactivator" evidence="14">
    <location>
        <begin position="4233"/>
        <end position="4370"/>
    </location>
</feature>
<feature type="zinc finger region" description="C4-type 1" evidence="5">
    <location>
        <begin position="1151"/>
        <end position="1179"/>
    </location>
</feature>
<feature type="zinc finger region" description="C4-type 2" evidence="5">
    <location>
        <begin position="1749"/>
        <end position="1785"/>
    </location>
</feature>
<feature type="zinc finger region" evidence="1">
    <location>
        <begin position="4306"/>
        <end position="4322"/>
    </location>
</feature>
<feature type="zinc finger region" evidence="1">
    <location>
        <begin position="4348"/>
        <end position="4361"/>
    </location>
</feature>
<feature type="region of interest" description="C4" evidence="17">
    <location>
        <begin position="392"/>
        <end position="416"/>
    </location>
</feature>
<feature type="region of interest" description="Disordered" evidence="23">
    <location>
        <begin position="995"/>
        <end position="1025"/>
    </location>
</feature>
<feature type="region of interest" description="HD1" evidence="1">
    <location>
        <begin position="2138"/>
        <end position="2385"/>
    </location>
</feature>
<feature type="region of interest" description="Y1" evidence="20">
    <location>
        <begin position="2383"/>
        <end position="2473"/>
    </location>
</feature>
<feature type="region of interest" description="ZF1" evidence="20">
    <location>
        <begin position="2387"/>
        <end position="2400"/>
    </location>
</feature>
<feature type="region of interest" description="ZF2" evidence="20">
    <location>
        <begin position="2433"/>
        <end position="2443"/>
    </location>
</feature>
<feature type="region of interest" description="CoV-Y" evidence="20">
    <location>
        <begin position="2474"/>
        <end position="2750"/>
    </location>
</feature>
<feature type="region of interest" description="Y2" evidence="20">
    <location>
        <begin position="2474"/>
        <end position="2566"/>
    </location>
</feature>
<feature type="region of interest" description="Y3" evidence="20">
    <location>
        <begin position="2567"/>
        <end position="2649"/>
    </location>
</feature>
<feature type="region of interest" description="Y4" evidence="20">
    <location>
        <begin position="2650"/>
        <end position="2750"/>
    </location>
</feature>
<feature type="region of interest" description="HD2" evidence="1">
    <location>
        <begin position="2752"/>
        <end position="3135"/>
    </location>
</feature>
<feature type="region of interest" description="HD3" evidence="1">
    <location>
        <begin position="3319"/>
        <end position="3775"/>
    </location>
</feature>
<feature type="compositionally biased region" description="Acidic residues" evidence="23">
    <location>
        <begin position="1000"/>
        <end position="1013"/>
    </location>
</feature>
<feature type="active site" description="For PL1-PRO activity" evidence="5">
    <location>
        <position position="1074"/>
    </location>
</feature>
<feature type="active site" description="For PL1-PRO activity" evidence="5">
    <location>
        <position position="1225"/>
    </location>
</feature>
<feature type="active site" description="For PL1-PRO activity" evidence="5">
    <location>
        <position position="1236"/>
    </location>
</feature>
<feature type="active site" description="For PL2-PRO activity" evidence="5">
    <location>
        <position position="1671"/>
    </location>
</feature>
<feature type="active site" description="For PL2-PRO activity" evidence="5">
    <location>
        <position position="1828"/>
    </location>
</feature>
<feature type="active site" description="For PL2-PRO activity" evidence="5">
    <location>
        <position position="1842"/>
    </location>
</feature>
<feature type="active site" description="For 3CL-PRO activity" evidence="7">
    <location>
        <position position="3287"/>
    </location>
</feature>
<feature type="active site" description="For 3CL-PRO activity" evidence="7">
    <location>
        <position position="3391"/>
    </location>
</feature>
<feature type="binding site" evidence="17">
    <location>
        <position position="392"/>
    </location>
    <ligand>
        <name>Zn(2+)</name>
        <dbReference type="ChEBI" id="CHEBI:29105"/>
        <label>1</label>
    </ligand>
</feature>
<feature type="binding site" evidence="17">
    <location>
        <position position="397"/>
    </location>
    <ligand>
        <name>Zn(2+)</name>
        <dbReference type="ChEBI" id="CHEBI:29105"/>
        <label>1</label>
    </ligand>
</feature>
<feature type="binding site" evidence="17">
    <location>
        <position position="413"/>
    </location>
    <ligand>
        <name>Zn(2+)</name>
        <dbReference type="ChEBI" id="CHEBI:29105"/>
        <label>1</label>
    </ligand>
</feature>
<feature type="binding site" evidence="17">
    <location>
        <position position="416"/>
    </location>
    <ligand>
        <name>Zn(2+)</name>
        <dbReference type="ChEBI" id="CHEBI:29105"/>
        <label>1</label>
    </ligand>
</feature>
<feature type="binding site" evidence="5">
    <location>
        <position position="1151"/>
    </location>
    <ligand>
        <name>Zn(2+)</name>
        <dbReference type="ChEBI" id="CHEBI:29105"/>
        <label>2</label>
    </ligand>
</feature>
<feature type="binding site" evidence="5">
    <location>
        <position position="1154"/>
    </location>
    <ligand>
        <name>Zn(2+)</name>
        <dbReference type="ChEBI" id="CHEBI:29105"/>
        <label>2</label>
    </ligand>
</feature>
<feature type="binding site" evidence="5">
    <location>
        <position position="1177"/>
    </location>
    <ligand>
        <name>Zn(2+)</name>
        <dbReference type="ChEBI" id="CHEBI:29105"/>
        <label>2</label>
    </ligand>
</feature>
<feature type="binding site" evidence="5">
    <location>
        <position position="1179"/>
    </location>
    <ligand>
        <name>Zn(2+)</name>
        <dbReference type="ChEBI" id="CHEBI:29105"/>
        <label>2</label>
    </ligand>
</feature>
<feature type="binding site" evidence="5">
    <location>
        <position position="1749"/>
    </location>
    <ligand>
        <name>Zn(2+)</name>
        <dbReference type="ChEBI" id="CHEBI:29105"/>
        <label>3</label>
    </ligand>
</feature>
<feature type="binding site" evidence="5">
    <location>
        <position position="1751"/>
    </location>
    <ligand>
        <name>Zn(2+)</name>
        <dbReference type="ChEBI" id="CHEBI:29105"/>
        <label>3</label>
    </ligand>
</feature>
<feature type="binding site" evidence="5">
    <location>
        <position position="1783"/>
    </location>
    <ligand>
        <name>Zn(2+)</name>
        <dbReference type="ChEBI" id="CHEBI:29105"/>
        <label>3</label>
    </ligand>
</feature>
<feature type="binding site" evidence="5">
    <location>
        <position position="1785"/>
    </location>
    <ligand>
        <name>Zn(2+)</name>
        <dbReference type="ChEBI" id="CHEBI:29105"/>
        <label>3</label>
    </ligand>
</feature>
<feature type="binding site" evidence="20">
    <location>
        <position position="2387"/>
    </location>
    <ligand>
        <name>Zn(2+)</name>
        <dbReference type="ChEBI" id="CHEBI:29105"/>
        <label>4</label>
    </ligand>
</feature>
<feature type="binding site" evidence="20">
    <location>
        <position position="2392"/>
    </location>
    <ligand>
        <name>Zn(2+)</name>
        <dbReference type="ChEBI" id="CHEBI:29105"/>
        <label>4</label>
    </ligand>
</feature>
<feature type="binding site" evidence="20">
    <location>
        <position position="2397"/>
    </location>
    <ligand>
        <name>Zn(2+)</name>
        <dbReference type="ChEBI" id="CHEBI:29105"/>
        <label>4</label>
    </ligand>
</feature>
<feature type="binding site" evidence="20">
    <location>
        <position position="2400"/>
    </location>
    <ligand>
        <name>Zn(2+)</name>
        <dbReference type="ChEBI" id="CHEBI:29105"/>
        <label>4</label>
    </ligand>
</feature>
<feature type="binding site" evidence="20">
    <location>
        <position position="2433"/>
    </location>
    <ligand>
        <name>Zn(2+)</name>
        <dbReference type="ChEBI" id="CHEBI:29105"/>
        <label>5</label>
    </ligand>
</feature>
<feature type="binding site" evidence="20">
    <location>
        <position position="2436"/>
    </location>
    <ligand>
        <name>Zn(2+)</name>
        <dbReference type="ChEBI" id="CHEBI:29105"/>
        <label>5</label>
    </ligand>
</feature>
<feature type="binding site" evidence="20">
    <location>
        <position position="2440"/>
    </location>
    <ligand>
        <name>Zn(2+)</name>
        <dbReference type="ChEBI" id="CHEBI:29105"/>
        <label>5</label>
    </ligand>
</feature>
<feature type="binding site" evidence="20">
    <location>
        <position position="2443"/>
    </location>
    <ligand>
        <name>Zn(2+)</name>
        <dbReference type="ChEBI" id="CHEBI:29105"/>
        <label>5</label>
    </ligand>
</feature>
<feature type="binding site" evidence="14">
    <location>
        <position position="4306"/>
    </location>
    <ligand>
        <name>Zn(2+)</name>
        <dbReference type="ChEBI" id="CHEBI:29105"/>
        <label>6</label>
    </ligand>
</feature>
<feature type="binding site" evidence="14">
    <location>
        <position position="4309"/>
    </location>
    <ligand>
        <name>Zn(2+)</name>
        <dbReference type="ChEBI" id="CHEBI:29105"/>
        <label>6</label>
    </ligand>
</feature>
<feature type="binding site" evidence="14">
    <location>
        <position position="4315"/>
    </location>
    <ligand>
        <name>Zn(2+)</name>
        <dbReference type="ChEBI" id="CHEBI:29105"/>
        <label>6</label>
    </ligand>
</feature>
<feature type="binding site" evidence="14">
    <location>
        <position position="4322"/>
    </location>
    <ligand>
        <name>Zn(2+)</name>
        <dbReference type="ChEBI" id="CHEBI:29105"/>
        <label>6</label>
    </ligand>
</feature>
<feature type="binding site" evidence="14">
    <location>
        <position position="4348"/>
    </location>
    <ligand>
        <name>Zn(2+)</name>
        <dbReference type="ChEBI" id="CHEBI:29105"/>
        <label>7</label>
    </ligand>
</feature>
<feature type="binding site" evidence="14">
    <location>
        <position position="4351"/>
    </location>
    <ligand>
        <name>Zn(2+)</name>
        <dbReference type="ChEBI" id="CHEBI:29105"/>
        <label>7</label>
    </ligand>
</feature>
<feature type="binding site" evidence="14">
    <location>
        <position position="4359"/>
    </location>
    <ligand>
        <name>Zn(2+)</name>
        <dbReference type="ChEBI" id="CHEBI:29105"/>
        <label>7</label>
    </ligand>
</feature>
<feature type="binding site" evidence="14">
    <location>
        <position position="4361"/>
    </location>
    <ligand>
        <name>Zn(2+)</name>
        <dbReference type="ChEBI" id="CHEBI:29105"/>
        <label>7</label>
    </ligand>
</feature>
<feature type="site" description="Cleavage; by PL1-PRO" evidence="1">
    <location>
        <begin position="246"/>
        <end position="247"/>
    </location>
</feature>
<feature type="site" description="Cleavage; by PL1-PRO" evidence="1">
    <location>
        <begin position="851"/>
        <end position="852"/>
    </location>
</feature>
<feature type="site" description="Cleavage; by PL2-PRO" evidence="1">
    <location>
        <begin position="2750"/>
        <end position="2751"/>
    </location>
</feature>
<feature type="site" description="Cleavage; by 3CL-PRO" evidence="1">
    <location>
        <begin position="3246"/>
        <end position="3247"/>
    </location>
</feature>
<feature type="site" description="Cleavage; by 3CL-PRO" evidence="1">
    <location>
        <begin position="3549"/>
        <end position="3550"/>
    </location>
</feature>
<feature type="site" description="Cleavage; by 3CL-PRO" evidence="1">
    <location>
        <begin position="3836"/>
        <end position="3837"/>
    </location>
</feature>
<feature type="site" description="Cleavage; by 3CL-PRO" evidence="1">
    <location>
        <begin position="3925"/>
        <end position="3926"/>
    </location>
</feature>
<feature type="site" description="Cleavage; by 3CL-PRO" evidence="1">
    <location>
        <begin position="4122"/>
        <end position="4123"/>
    </location>
</feature>
<feature type="site" description="Cleavage; by 3CL-PRO" evidence="1">
    <location>
        <begin position="4232"/>
        <end position="4233"/>
    </location>
</feature>
<feature type="site" description="Cleavage; by 3CL-PRO" evidence="1">
    <location>
        <begin position="4369"/>
        <end position="4370"/>
    </location>
</feature>
<feature type="disulfide bond" evidence="21">
    <location>
        <begin position="2251"/>
        <end position="2275"/>
    </location>
</feature>
<feature type="disulfide bond" evidence="21">
    <location>
        <begin position="2266"/>
        <end position="2272"/>
    </location>
</feature>
<feature type="sequence variant" description="In strain: ATCC VR-759 and Isolate clinical OC43-Paris.">
    <original>H</original>
    <variation>D</variation>
    <location>
        <position position="88"/>
    </location>
</feature>
<feature type="sequence variant" description="In strain: ATCC VR-759 and Isolate clinical OC43-Paris.">
    <original>C</original>
    <variation>R</variation>
    <location>
        <position position="207"/>
    </location>
</feature>
<feature type="sequence variant" description="In strain: ATCC VR-759 and Isolate clinical OC43-Paris.">
    <original>P</original>
    <variation>L</variation>
    <location>
        <position position="291"/>
    </location>
</feature>
<feature type="sequence variant" description="In strain: ATCC VR-759 and Isolate clinical OC43-Paris.">
    <original>C</original>
    <variation>R</variation>
    <location>
        <position position="317"/>
    </location>
</feature>
<feature type="sequence variant" description="In strain: ATCC VR-759 and Isolate clinical OC43-Paris.">
    <original>F</original>
    <variation>V</variation>
    <location>
        <position position="356"/>
    </location>
</feature>
<feature type="sequence variant" description="In strain: ATCC VR-759 and Isolate clinical OC43-Paris.">
    <original>I</original>
    <variation>L</variation>
    <location>
        <position position="545"/>
    </location>
</feature>
<feature type="sequence variant" description="In strain: Isolate 87309 Belgium 2003.">
    <original>D</original>
    <variation>N</variation>
    <location>
        <position position="762"/>
    </location>
</feature>
<feature type="sequence variant" description="In strain: ATCC VR-759, Isolate clinical OC43-Paris and Isolate 87309 Belgium 2003.">
    <original>F</original>
    <variation>L</variation>
    <location>
        <position position="953"/>
    </location>
</feature>
<feature type="sequence variant" description="In strain: ATCC VR-759, Isolate clinical OC43-Paris and Isolate 87309 Belgium 2003.">
    <original>I</original>
    <variation>V</variation>
    <location>
        <position position="989"/>
    </location>
</feature>
<feature type="sequence variant" description="In strain: ATCC VR-759, Isolate clinical OC43-Paris and Isolate 87309 Belgium 2003.">
    <original>V</original>
    <variation>A</variation>
    <location>
        <position position="1305"/>
    </location>
</feature>
<feature type="sequence variant" description="In strain: ATCC VR-759 and Isolate clinical OC43-Paris.">
    <original>N</original>
    <variation>D</variation>
    <location>
        <position position="1328"/>
    </location>
</feature>
<feature type="sequence variant" description="In strain: ATCC VR-759 and Isolate clinical OC43-Paris.">
    <original>F</original>
    <variation>L</variation>
    <location>
        <position position="1379"/>
    </location>
</feature>
<feature type="sequence variant" description="In strain: ATCC VR-759 and Isolate clinical OC43-Paris.">
    <original>L</original>
    <variation>V</variation>
    <location>
        <position position="1504"/>
    </location>
</feature>
<feature type="sequence variant" description="In strain: Isolate 87309 Belgium 2003.">
    <original>G</original>
    <variation>E</variation>
    <location>
        <position position="1740"/>
    </location>
</feature>
<feature type="sequence variant" description="In strain: ATCC VR-759 and Isolate clinical OC43-Paris.">
    <original>N</original>
    <variation>K</variation>
    <location>
        <position position="1825"/>
    </location>
</feature>
<feature type="sequence variant" description="In strain: ATCC VR-759, Isolate clinical OC43-Paris and Isolate 87309 Belgium 2003.">
    <original>S</original>
    <variation>A</variation>
    <location>
        <position position="1936"/>
    </location>
</feature>
<feature type="sequence variant" description="In strain: ATCC VR-759, Isolate clinical OC43-Paris.">
    <original>N</original>
    <variation>T</variation>
    <location>
        <position position="1965"/>
    </location>
</feature>
<feature type="sequence variant" description="In strain: ATCC VR-759, Isolate clinical OC43-Paris and Isolate 87309 Belgium 2003.">
    <original>L</original>
    <variation>S</variation>
    <location>
        <position position="2004"/>
    </location>
</feature>
<feature type="sequence variant" description="In strain: ATCC VR-759 and Isolate clinical OC43-Paris.">
    <original>S</original>
    <variation>G</variation>
    <location>
        <position position="2022"/>
    </location>
</feature>
<feature type="sequence variant" description="In strain: ATCC VR-759 and Isolate clinical OC43-Paris.">
    <original>TSA</original>
    <variation>ISV</variation>
    <location>
        <begin position="2138"/>
        <end position="2140"/>
    </location>
</feature>
<feature type="sequence variant" description="In strain: ATCC VR-759 and Isolate clinical OC43-Paris.">
    <original>I</original>
    <variation>M</variation>
    <location>
        <position position="2256"/>
    </location>
</feature>
<feature type="sequence variant" description="In strain: Isolate 87309 Belgium 2003.">
    <original>Q</original>
    <variation>H</variation>
    <location>
        <position position="2257"/>
    </location>
</feature>
<feature type="sequence variant" description="In strain: ATCC VR-759 and Isolate clinical OC43-Paris.">
    <original>K</original>
    <variation>R</variation>
    <location>
        <position position="2386"/>
    </location>
</feature>
<feature type="sequence variant" description="In strain: ATCC VR-759, Isolate clinical OC43-Paris and Isolate 87309 Belgium 2003.">
    <original>I</original>
    <variation>T</variation>
    <location>
        <position position="2500"/>
    </location>
</feature>
<feature type="sequence variant" description="In strain: ATCC VR-759 and Isolate clinical OC43-Paris.">
    <original>D</original>
    <variation>E</variation>
    <location>
        <position position="2921"/>
    </location>
</feature>
<feature type="sequence variant" description="In strain: ATCC VR-759 and Isolate clinical OC43-Paris.">
    <original>V</original>
    <variation>I</variation>
    <location>
        <position position="2961"/>
    </location>
</feature>
<feature type="sequence variant" description="In strain: ATCC VR-759 and Isolate clinical OC43-Paris.">
    <original>T</original>
    <variation>I</variation>
    <location>
        <position position="3086"/>
    </location>
</feature>
<feature type="sequence variant" description="In strain: ATCC VR-759 and Isolate clinical OC43-Paris.">
    <original>P</original>
    <variation>L</variation>
    <location>
        <position position="3440"/>
    </location>
</feature>
<feature type="sequence variant" description="In strain: ATCC VR-759 and Isolate clinical OC43-Paris.">
    <original>L</original>
    <variation>V</variation>
    <location>
        <position position="3451"/>
    </location>
</feature>
<feature type="sequence variant" description="In strain: ATCC VR-759 and Isolate clinical OC43-Paris.">
    <original>I</original>
    <variation>V</variation>
    <location>
        <position position="3466"/>
    </location>
</feature>
<feature type="sequence variant" description="In strain: ATCC VR-759 and Isolate clinical OC43-Paris.">
    <original>I</original>
    <variation>V</variation>
    <location>
        <position position="4067"/>
    </location>
</feature>
<feature type="sequence variant" description="In strain: ATCC VR-759, Isolate clinical OC43-Paris and Isolate 87309 Belgium 2003.">
    <original>I</original>
    <variation>V</variation>
    <location>
        <position position="4071"/>
    </location>
</feature>
<feature type="sequence conflict" description="In Ref. 3." evidence="25" ref="3">
    <original>I</original>
    <variation>M</variation>
    <location>
        <position position="426"/>
    </location>
</feature>
<feature type="sequence conflict" description="In Ref. 3." evidence="25" ref="3">
    <original>D</original>
    <variation>A</variation>
    <location>
        <position position="813"/>
    </location>
</feature>
<feature type="sequence conflict" description="In Ref. 2." evidence="25" ref="2">
    <original>LN</original>
    <variation>FK</variation>
    <location>
        <begin position="4376"/>
        <end position="4377"/>
    </location>
</feature>
<feature type="helix" evidence="26">
    <location>
        <begin position="4244"/>
        <end position="4251"/>
    </location>
</feature>
<feature type="helix" evidence="26">
    <location>
        <begin position="4255"/>
        <end position="4264"/>
    </location>
</feature>
<feature type="strand" evidence="26">
    <location>
        <begin position="4286"/>
        <end position="4290"/>
    </location>
</feature>
<feature type="strand" evidence="26">
    <location>
        <begin position="4297"/>
        <end position="4301"/>
    </location>
</feature>
<feature type="helix" evidence="26">
    <location>
        <begin position="4302"/>
        <end position="4305"/>
    </location>
</feature>
<feature type="helix" evidence="26">
    <location>
        <begin position="4307"/>
        <end position="4311"/>
    </location>
</feature>
<feature type="strand" evidence="26">
    <location>
        <begin position="4327"/>
        <end position="4332"/>
    </location>
</feature>
<feature type="helix" evidence="26">
    <location>
        <begin position="4338"/>
        <end position="4343"/>
    </location>
</feature>
<feature type="turn" evidence="26">
    <location>
        <begin position="4349"/>
        <end position="4351"/>
    </location>
</feature>
<feature type="turn" evidence="26">
    <location>
        <begin position="4355"/>
        <end position="4358"/>
    </location>
</feature>
<reference key="1">
    <citation type="journal article" date="2005" name="Virology">
        <title>Circulation of genetically distinct contemporary human coronavirus OC43 strains.</title>
        <authorList>
            <person name="Vijgen L."/>
            <person name="Keyaerts E."/>
            <person name="Lemey P."/>
            <person name="Moes E."/>
            <person name="Li S."/>
            <person name="Vandamme A.M."/>
            <person name="Van Ranst M."/>
        </authorList>
    </citation>
    <scope>NUCLEOTIDE SEQUENCE [GENOMIC RNA]</scope>
    <source>
        <strain>Isolate 19572 Belgium 2004</strain>
        <strain>Isolate 87309 Belgium 2003</strain>
    </source>
</reference>
<reference key="2">
    <citation type="journal article" date="2004" name="J. Virol.">
        <title>Human respiratory coronavirus OC43: genetic stability and neuroinvasion.</title>
        <authorList>
            <person name="St Jean J.R."/>
            <person name="Jacomy H."/>
            <person name="Desforges M."/>
            <person name="Vabret A."/>
            <person name="Freymuth F."/>
            <person name="Talbot P.J."/>
        </authorList>
    </citation>
    <scope>NUCLEOTIDE SEQUENCE [GENOMIC RNA]</scope>
    <source>
        <strain>Isolate ATCC VR-759</strain>
        <strain>Isolate clinical OC43-Paris</strain>
    </source>
</reference>
<reference key="3">
    <citation type="journal article" date="2005" name="J. Virol.">
        <title>Complete genomic sequence of human coronavirus OC43: molecular clock analysis suggests a relatively recent zoonotic coronavirus transmission event.</title>
        <authorList>
            <person name="Vijgen L."/>
            <person name="Keyaerts E."/>
            <person name="Moes E."/>
            <person name="Thoelen I."/>
            <person name="Wollants E."/>
            <person name="Lemey P."/>
            <person name="Vandamme A.M."/>
            <person name="Van Ranst M."/>
        </authorList>
    </citation>
    <scope>NUCLEOTIDE SEQUENCE [GENOMIC RNA]</scope>
    <source>
        <strain>Isolate ATCC VR-759</strain>
    </source>
</reference>
<reference key="4">
    <citation type="journal article" date="2022" name="PLoS Pathog.">
        <title>Nsp1 proteins of human coronaviruses HCoV-OC43 and SARS-CoV2 inhibit stress granule formation.</title>
        <authorList>
            <person name="Dolliver S.M."/>
            <person name="Kleer M."/>
            <person name="Bui-Marinos M.P."/>
            <person name="Ying S."/>
            <person name="Corcoran J.A."/>
            <person name="Khaperskyy D.A."/>
        </authorList>
    </citation>
    <scope>FUNCTION (HOST TRANSLATION INHIBITOR NSP1)</scope>
</reference>
<sequence>MSKINKYGLELHWAPEFPWMFEDAEEKLDNPSSSEVDMICSTTAQKLETDGICPENHVMVDCRRLLKQECCVQSSLIREIVMNASPYHLEVLLQDALQSREAVLVTTPLGMSLEACYVRGCNPKGWTMGLFRRRSVCNTGRCTVNKHVAYQLYMIDPAGVCLGAGQFVGWVIPLAFMPVQSRKFIVPWVMYLRKRGEKGAYNKDHGCGGFGHVYDFKVEDAYDQVHDEPKGKFSKKAYALIRGYRGVKPLLYVDQYGCDYTGSLADGLEAYADKTLQEMKALFPTWSQELPFDVIVAWHVVRDPRYVMRLQSAATICSVAYVANPTEDLCDGSVVIKEPVHVYADDSIILRQYNLFDIMSHFYMEADTVVNAFYGVALKDCGFVMQFGYIDCEQDSCDFKGWIPGNMIDGFACTTCGHVYEVGDLIAQSSGVLPVNPVLHTKSAAGYGGFGCKDSFTLYGQTVVYFGGCVYWSPARNIWIPILKSSVKSYDSLVYTGVLGCKAIVKETNLICKALYLDYVQHKCGNLHQRELLGVSDVWHKQLLINRGVYKPLLENIDYFNMRRAKFSLETFTVCADGFMPFLLDDLVPRAYYLAVSGQAFCDYADKLCHAVVSKSKELLDVSLDSLGAAIHYLNSKIVDLAQHFSDFGTSFVSKIVHFFKTFTTSTALAFAWVLFHVLHGAYIVVESDIYFVKNIPRYASAVAQAFQSVAKVVLDSLRVTFIDGLSCFKIGRRRICLSGRKIYEVERGLLHSSQLPLDVYDLTMPSQVQKAKQKPIYLKGSGSDFSLADSVVEVVTTSLTPCGYSEPPKVADKICIVDNVYMAKAGDKYYPVVVDDHVGLLDQAWRVPCAGRRVTFKEQPTVKEIISMPKIIKVFYELDNDFNTILNTACGVFEVDDTVDMEEFYAVVIDAIEEKLSPCKELEGVGAKVSAFLQKLEDNPLFLFDEAGEEVFAPKLYCAFTAPEDDDFLEESDVEEDDVEGEETDLTITSAGQPCVASEQEESSEVLEDTLDDGPSVETSDSQVEEDVEMSDFVDLESVIQDYENVCFEFYTTEPEFVKVLGLYVPKATRNNCWLRSVLAVMQKLPCQFKDKNLQDLWVLYKQQYSQLFVDTLVNKIPANIVLPQGGYVADFAYWFLTLCDWQCVAYWKCIKCDLALKLKGLDAMFFYGDVVSHICKCGESMVLIDVDVPFTAHFALKDKLFCAFITKRIVYKAACVVDVNDSHSMAVVDGKQIDDHRITSITSDKFDFIIGHGMSFSMTTFEIAQLYGSCITPNVCFVKGDIIKVSKLVKAEVVVNPANGHMVHGGGVAKAIAVAAGQQFVKETTNMVKSKGVCATGDCYVSTGGKLCKTVLNVVGPDARTQGKQSYVLLERVYKHFNNYDCVVTTLISAGIFSVPSDVSLTYLLGTAKKQVVLVSNNQEDFDLISKCQITAVEGTKKLAARLSFNVGRSIVYETDANKLILINDVAFVSTFNVLQDVLSLRHDIALDDDARTFVQSNVDVLPEGWRVVNKFYQINGVRTVKYFECTGGIDICSQDKVFGYVQQGIFNKATVAQIKALFLDKVDILLTVDGVNFTNRFVPVGESFGKSLGNVFCDGVNVTKHKCDINYKGKVFFQFDNLSSEDLKAVRSSFNFDQKELLAYYNMLVNCFKWQVVVNGKYFTFKQANNNCFVNVSCLMLQSLHLTFKIVQWQEAWLEFRSGRPARFVALVLAKGGFKFGDPADSRDFLRVVFSQVDLTGAICDFEIACKCGVKQEQRTGLDAVMHFGTLSREDLEIGYTVDCSCGKKLIHCVRFDVPFLICSNTPASVKLPKGVGSANIFIGDNVGHYVHVKCEQSYQLYDASNVKKVTDVTGKLSDCLYLKNLKQTFKSVLTTYYLDDVKKIEYKPDLSQYYCDGGKYYTQRIIKAQFKTFEKVDGVYTNFKLIGHTVCDSLNSKLGFDSSKEFVEYKITEWPTATGDVVLANDDLYVKRYERGCITFGKPVIWLSHEKASLNSLTYFNRPLLVDDNKFDVLKVDDVDDSGDSSESGAKETKEINIIKLSGVKKPFKVEDSVIVNDDTSETKYVKSLSIVDVYDMWLTGCKYVVRTANALSRAVNVPTIRKFIKFGMTLVSIPIDLLNLREIKPAVNVVKAVRNKTSACFNFIKWLFVLLFGWIKISADNKVIYTTEIASKLTCKLVALAFKNAFLTFKWSMVARGACIIATIFLLWFNFIYANVIFSDFYLPKIGFLPTFVGKIAQWIKNTFSLVTICDLYSIQDVGFKNQYCNGSIACQFCLAGFDMLDNYKAIDVVQYEADRRAFVDYTGVLKIVIELIVSYALYTAWFYPLFALISIQILTTWLPELFMLSTLHWSFRLLVALANMLPAHVFMRFYIIIASFIKLFSLFKHVAYGCSKSGCLFCYKRNRSLRVKCSTIVGGMIRYYDVMANGGTGFCSKHQWNCIDCDSYKPGNTFITVEAALDLSKELKRPIQPTDVAYHTVTDVKQVGCSMRLFYDRDGQRIYDDVNASLFVDYSNLLHSKVKSVPNMHVVVVENDADKANFLNAAVFYAQSLFRPILMVDKNLITTANTGTSVTETMFDVYVDTFLSMFDVDKKSLNALIATAHSSIKQGTQIYKVLDTFLSCARKSCSIDSDVDTKCLADSVMSAVSAGLELTDESCNNLVPTYLKSDNIVAADLGVLIQNSAKHVQGNVAKIAGVSCIWSVDAFNQFSSDFQHKLKKACCKTGLKLKLTYNKQMANVSVLTTPFSLKGGAVFSYFVYVCFVLSLVCFIGLWCLMPTYTVHKSDFQLPVYASYKVLDNGVIRDVSVEDVCFANKFEQFDQWYESTFGLSYYSNSMACPIVVAVIDQDFGSTVFNVPTKVLRYGYHVLHFITHALSADGVQCYTPHSQISYSNFYASGCVLSSACTMFTMADGSPQPYCYTDGLMQNASLYSSLVPHVRYNLANAKGFIRFPEVLREGLVRVVRTRSMSYCRVGLCEEADEGICFNFNGSWVLNNDYYRSLPGTFCGRDVFDLIYQLFKGLAQPVDFLALTASSIAGAILAVIVVLVFYYLIKLKRAFGDYTSVVFVNVIVWCVNFMMLFVFQVYPTLSCVYAICYFYATLYFPSEISVIMHLQWLVMYGTIMPLWFCLLYIAVVVSNHAFWVFSYCRKLGTSVRSDGTFEEMALTTFMITKDSYCKLKNSLSDVAFNRYLSLYNKYRYYSGKMDTAAYREAACSQLAKAMDTFTNNNGSDVLYQPPTASVSTSFLQSGIVKMVNPTSKVEPCVVSVTYGNMTLNGLWLDDKVYCPRHVICSASDMTNPDYTNLLCRVTSSDFTVLFDRLSLTVMSYQMRGCMLVLTVTLQNSRTPKYTFGVVKPGETFTVLAAYNGKPQGAFHVTMRSSYTIKGSFLCGSCGSVGYVIMGDCVKFVYMHQLELSTGCHTGTDFNGDFYGPYKDAQVVQLPIQDYIQSVNFLAWLYAAILNNCNWFIQSDKCSVEDFNVWALSNGFSQVKSDLVIDALASMTGVSLETLLAAIKRLKNGFQGRQIMGSCSFEDELTPSDVYQQLAGIKLQSKRTRLFKGTVCWIMASTFLFSCIITAFVKWTMFMYVTTNMFSITFCALCVISLAMLLVKHKHLYLTMYITPVLFTLLYNNYLVVYKHTFRGYVYAWLSYYVPSVEYTYTDEVIYGMLLLVGMVFVTLRSINHDLFSFIMFVGRLISVFSLWYKGSNLEEEILLMLASLFGTYTWTTVLSMAVAKVIAKWVAVNVLYFTDIPQIKIVLLCYLFIGYIISCYWGLFSLMNSLFRMPLGVYNYKISVQELRYMNANGLRPPKNSFEALMLNFKLLGIGGVPIIEVSQFQSKLTDVKCANVVLLNCLQHLHVASNSKLWHYCSTLHNEILATSDLSVAFEKLAQLLIVLFANPAAVDSKCLTSIEEVCDDYAKDNTVLQALQSEFVNMASFVEYEVAKKNLDEARFSGSANQQQLKQLEKACNIAKSAYERDRAVAKKLERMADLALTNMYKEARINDKKSKVVSALQTMLFSMVRKLDNQALNSILDNAVKGCVPLNAIPSLAANTLNIIVPDKSVYDQIVDNIYVTYAGNVWQIQTIQDSDGTNKQLNEISDDCNWPLVIIANRYNEVSATVLQNNELMPAKLKIQVVNSGPDQTCNTPTQCYYNNSNNGKIVYAILSDVDGLKYTKILKDDGNFVVLELDPPCKFTVQDAKGLKIKYLYFVKGCNTLARGWVVGTISSTVRLQAGTATEYASNSSILSLCAFSVDPKKTYLDFIQQGGTPIANCVKMLCDHAGTGMAITVKPDATTSQDSYGGASVCIYCRARVEHPDVDGLCKLRGKFVQVPVGIKDPVSYVLTHDVCRVCGFWRDGSCSCVSTDTTVQSKDTNFLNGFGVRV</sequence>
<keyword id="KW-0002">3D-structure</keyword>
<keyword id="KW-1072">Activation of host autophagy by virus</keyword>
<keyword id="KW-1132">Decay of host mRNAs by virus</keyword>
<keyword id="KW-1015">Disulfide bond</keyword>
<keyword id="KW-0255">Endonuclease</keyword>
<keyword id="KW-1262">Eukaryotic host gene expression shutoff by virus</keyword>
<keyword id="KW-1193">Eukaryotic host translation shutoff by virus</keyword>
<keyword id="KW-1035">Host cytoplasm</keyword>
<keyword id="KW-1190">Host gene expression shutoff by virus</keyword>
<keyword id="KW-1043">Host membrane</keyword>
<keyword id="KW-1192">Host mRNA suppression by virus</keyword>
<keyword id="KW-0945">Host-virus interaction</keyword>
<keyword id="KW-0378">Hydrolase</keyword>
<keyword id="KW-1090">Inhibition of host innate immune response by virus</keyword>
<keyword id="KW-1114">Inhibition of host interferon signaling pathway by virus</keyword>
<keyword id="KW-1092">Inhibition of host IRF3 by virus</keyword>
<keyword id="KW-1095">Inhibition of host ISG15 by virus</keyword>
<keyword id="KW-1113">Inhibition of host RLR pathway by virus</keyword>
<keyword id="KW-0922">Interferon antiviral system evasion</keyword>
<keyword id="KW-0472">Membrane</keyword>
<keyword id="KW-0479">Metal-binding</keyword>
<keyword id="KW-0489">Methyltransferase</keyword>
<keyword id="KW-1127">Modulation of host ubiquitin pathway by viral deubiquitinase</keyword>
<keyword id="KW-1130">Modulation of host ubiquitin pathway by virus</keyword>
<keyword id="KW-0540">Nuclease</keyword>
<keyword id="KW-0645">Protease</keyword>
<keyword id="KW-1185">Reference proteome</keyword>
<keyword id="KW-0677">Repeat</keyword>
<keyword id="KW-0688">Ribosomal frameshifting</keyword>
<keyword id="KW-0694">RNA-binding</keyword>
<keyword id="KW-0788">Thiol protease</keyword>
<keyword id="KW-0808">Transferase</keyword>
<keyword id="KW-0812">Transmembrane</keyword>
<keyword id="KW-1133">Transmembrane helix</keyword>
<keyword id="KW-0833">Ubl conjugation pathway</keyword>
<keyword id="KW-0899">Viral immunoevasion</keyword>
<keyword id="KW-0862">Zinc</keyword>
<keyword id="KW-0863">Zinc-finger</keyword>
<accession>P0C6U7</accession>
<accession>Q9WAC3</accession>
<protein>
    <recommendedName>
        <fullName>Replicase polyprotein 1a</fullName>
        <shortName>pp1a</shortName>
    </recommendedName>
    <alternativeName>
        <fullName>ORF1a polyprotein</fullName>
    </alternativeName>
    <component>
        <recommendedName>
            <fullName>Non-structural protein 1</fullName>
            <shortName>nsp1</shortName>
        </recommendedName>
        <alternativeName>
            <fullName>p28</fullName>
        </alternativeName>
    </component>
    <component>
        <recommendedName>
            <fullName>Non-structural protein 2</fullName>
            <shortName>nsp2</shortName>
        </recommendedName>
        <alternativeName>
            <fullName>p65</fullName>
        </alternativeName>
    </component>
    <component>
        <recommendedName>
            <fullName>Papain-like protease nsp3</fullName>
            <shortName>PL-PRO</shortName>
            <ecNumber>3.4.19.12</ecNumber>
            <ecNumber>3.4.22.-</ecNumber>
        </recommendedName>
        <alternativeName>
            <fullName>Non-structural protein 3</fullName>
            <shortName>nsp3</shortName>
        </alternativeName>
        <alternativeName>
            <fullName>PL1-PRO/PL2-PRO</fullName>
        </alternativeName>
        <alternativeName>
            <fullName>PL1/PL2</fullName>
        </alternativeName>
        <alternativeName>
            <fullName>PL2-PRO</fullName>
        </alternativeName>
        <alternativeName>
            <fullName>Papain-like proteinases 1/2</fullName>
        </alternativeName>
        <alternativeName>
            <fullName>p210</fullName>
        </alternativeName>
    </component>
    <component>
        <recommendedName>
            <fullName>Non-structural protein 4</fullName>
            <shortName>nsp4</shortName>
        </recommendedName>
        <alternativeName>
            <fullName>Peptide HD2</fullName>
        </alternativeName>
        <alternativeName>
            <fullName>p44</fullName>
        </alternativeName>
    </component>
    <component>
        <recommendedName>
            <fullName>3C-like proteinase nsp5</fullName>
            <shortName>3CL-PRO</shortName>
            <shortName>3CLp</shortName>
            <ecNumber>3.4.22.69</ecNumber>
        </recommendedName>
        <alternativeName>
            <fullName>M-PRO</fullName>
        </alternativeName>
        <alternativeName>
            <fullName>nsp5</fullName>
        </alternativeName>
        <alternativeName>
            <fullName>p27</fullName>
        </alternativeName>
    </component>
    <component>
        <recommendedName>
            <fullName>Non-structural protein 6</fullName>
            <shortName>nsp6</shortName>
        </recommendedName>
    </component>
    <component>
        <recommendedName>
            <fullName>Non-structural protein 7</fullName>
            <shortName>nsp7</shortName>
        </recommendedName>
        <alternativeName>
            <fullName>p10</fullName>
        </alternativeName>
    </component>
    <component>
        <recommendedName>
            <fullName>Non-structural protein 8</fullName>
            <shortName>nsp8</shortName>
        </recommendedName>
        <alternativeName>
            <fullName>p22</fullName>
        </alternativeName>
    </component>
    <component>
        <recommendedName>
            <fullName>RNA-capping enzyme subunit nsp9</fullName>
        </recommendedName>
        <alternativeName>
            <fullName>Non-structural protein 9</fullName>
            <shortName>nsp9</shortName>
            <ecNumber>2.7.7.50</ecNumber>
        </alternativeName>
        <alternativeName>
            <fullName>p12</fullName>
        </alternativeName>
    </component>
    <component>
        <recommendedName>
            <fullName>Non-structural protein 10</fullName>
            <shortName>nsp10</shortName>
        </recommendedName>
        <alternativeName>
            <fullName>Growth factor-like peptide</fullName>
            <shortName>GFL</shortName>
        </alternativeName>
        <alternativeName>
            <fullName>p15</fullName>
        </alternativeName>
    </component>
    <component>
        <recommendedName>
            <fullName>Non-structural protein 11</fullName>
            <shortName>nsp11</shortName>
        </recommendedName>
    </component>
</protein>
<proteinExistence type="evidence at protein level"/>